<evidence type="ECO:0000250" key="1"/>
<evidence type="ECO:0000250" key="2">
    <source>
        <dbReference type="UniProtKB" id="P13284"/>
    </source>
</evidence>
<evidence type="ECO:0000255" key="3"/>
<evidence type="ECO:0000269" key="4">
    <source>
    </source>
</evidence>
<evidence type="ECO:0000269" key="5">
    <source>
    </source>
</evidence>
<evidence type="ECO:0000269" key="6">
    <source>
    </source>
</evidence>
<evidence type="ECO:0000305" key="7"/>
<evidence type="ECO:0007829" key="8">
    <source>
        <dbReference type="PDB" id="6NWX"/>
    </source>
</evidence>
<protein>
    <recommendedName>
        <fullName>Gamma-interferon-inducible lysosomal thiol reductase</fullName>
        <ecNumber evidence="2">1.8.-.-</ecNumber>
    </recommendedName>
    <alternativeName>
        <fullName>Gamma-interferon-inducible protein IP-30</fullName>
    </alternativeName>
    <alternativeName>
        <fullName>Lysosomal thiol reductase IP30</fullName>
    </alternativeName>
</protein>
<keyword id="KW-0002">3D-structure</keyword>
<keyword id="KW-1015">Disulfide bond</keyword>
<keyword id="KW-0325">Glycoprotein</keyword>
<keyword id="KW-0391">Immunity</keyword>
<keyword id="KW-0458">Lysosome</keyword>
<keyword id="KW-0560">Oxidoreductase</keyword>
<keyword id="KW-0676">Redox-active center</keyword>
<keyword id="KW-1185">Reference proteome</keyword>
<keyword id="KW-0964">Secreted</keyword>
<keyword id="KW-0732">Signal</keyword>
<dbReference type="EC" id="1.8.-.-" evidence="2"/>
<dbReference type="EMBL" id="AF309649">
    <property type="protein sequence ID" value="AAG34681.1"/>
    <property type="molecule type" value="mRNA"/>
</dbReference>
<dbReference type="EMBL" id="AF309650">
    <property type="protein sequence ID" value="AAG34682.1"/>
    <property type="molecule type" value="Genomic_DNA"/>
</dbReference>
<dbReference type="EMBL" id="AF290973">
    <property type="protein sequence ID" value="AAG00598.1"/>
    <property type="status" value="ALT_INIT"/>
    <property type="molecule type" value="mRNA"/>
</dbReference>
<dbReference type="EMBL" id="AK156914">
    <property type="protein sequence ID" value="BAE33895.1"/>
    <property type="molecule type" value="mRNA"/>
</dbReference>
<dbReference type="EMBL" id="AC162446">
    <property type="status" value="NOT_ANNOTATED_CDS"/>
    <property type="molecule type" value="Genomic_DNA"/>
</dbReference>
<dbReference type="EMBL" id="CH466569">
    <property type="protein sequence ID" value="EDL28872.1"/>
    <property type="molecule type" value="Genomic_DNA"/>
</dbReference>
<dbReference type="EMBL" id="BC054852">
    <property type="protein sequence ID" value="AAH54852.1"/>
    <property type="molecule type" value="mRNA"/>
</dbReference>
<dbReference type="RefSeq" id="NP_075552.2">
    <property type="nucleotide sequence ID" value="NM_023065.3"/>
</dbReference>
<dbReference type="PDB" id="6NWX">
    <property type="method" value="X-ray"/>
    <property type="resolution" value="2.00 A"/>
    <property type="chains" value="A/B=49-240"/>
</dbReference>
<dbReference type="PDBsum" id="6NWX"/>
<dbReference type="SMR" id="Q9ESY9"/>
<dbReference type="BioGRID" id="211166">
    <property type="interactions" value="1"/>
</dbReference>
<dbReference type="FunCoup" id="Q9ESY9">
    <property type="interactions" value="511"/>
</dbReference>
<dbReference type="GlyCosmos" id="Q9ESY9">
    <property type="glycosylation" value="2 sites, No reported glycans"/>
</dbReference>
<dbReference type="GlyGen" id="Q9ESY9">
    <property type="glycosylation" value="3 sites, 1 O-linked glycan (1 site)"/>
</dbReference>
<dbReference type="iPTMnet" id="Q9ESY9"/>
<dbReference type="PhosphoSitePlus" id="Q9ESY9"/>
<dbReference type="jPOST" id="Q9ESY9"/>
<dbReference type="PaxDb" id="10090-ENSMUSP00000034299"/>
<dbReference type="PeptideAtlas" id="Q9ESY9"/>
<dbReference type="ProteomicsDB" id="267793"/>
<dbReference type="Pumba" id="Q9ESY9"/>
<dbReference type="Antibodypedia" id="27932">
    <property type="antibodies" value="168 antibodies from 29 providers"/>
</dbReference>
<dbReference type="DNASU" id="65972"/>
<dbReference type="Ensembl" id="ENSMUST00000222087.4">
    <property type="protein sequence ID" value="ENSMUSP00000159394.2"/>
    <property type="gene ID" value="ENSMUSG00000031838.11"/>
</dbReference>
<dbReference type="GeneID" id="65972"/>
<dbReference type="KEGG" id="mmu:65972"/>
<dbReference type="UCSC" id="uc009mbm.1">
    <property type="organism name" value="mouse"/>
</dbReference>
<dbReference type="AGR" id="MGI:2137648"/>
<dbReference type="CTD" id="10437"/>
<dbReference type="MGI" id="MGI:2137648">
    <property type="gene designation" value="Ifi30"/>
</dbReference>
<dbReference type="eggNOG" id="KOG3160">
    <property type="taxonomic scope" value="Eukaryota"/>
</dbReference>
<dbReference type="GeneTree" id="ENSGT00390000010450"/>
<dbReference type="HOGENOM" id="CLU_066886_0_0_1"/>
<dbReference type="InParanoid" id="Q9ESY9"/>
<dbReference type="OMA" id="CQLYKGV"/>
<dbReference type="OrthoDB" id="958254at2759"/>
<dbReference type="PhylomeDB" id="Q9ESY9"/>
<dbReference type="TreeFam" id="TF315141"/>
<dbReference type="Reactome" id="R-MMU-2132295">
    <property type="pathway name" value="MHC class II antigen presentation"/>
</dbReference>
<dbReference type="BioGRID-ORCS" id="65972">
    <property type="hits" value="3 hits in 73 CRISPR screens"/>
</dbReference>
<dbReference type="ChiTaRS" id="Ifi30">
    <property type="organism name" value="mouse"/>
</dbReference>
<dbReference type="PRO" id="PR:Q9ESY9"/>
<dbReference type="Proteomes" id="UP000000589">
    <property type="component" value="Chromosome 8"/>
</dbReference>
<dbReference type="RNAct" id="Q9ESY9">
    <property type="molecule type" value="protein"/>
</dbReference>
<dbReference type="Bgee" id="ENSMUSG00000031838">
    <property type="expression patterns" value="Expressed in spleen and 74 other cell types or tissues"/>
</dbReference>
<dbReference type="GO" id="GO:0030054">
    <property type="term" value="C:cell junction"/>
    <property type="evidence" value="ECO:0007669"/>
    <property type="project" value="Ensembl"/>
</dbReference>
<dbReference type="GO" id="GO:0005829">
    <property type="term" value="C:cytosol"/>
    <property type="evidence" value="ECO:0007669"/>
    <property type="project" value="Ensembl"/>
</dbReference>
<dbReference type="GO" id="GO:0005576">
    <property type="term" value="C:extracellular region"/>
    <property type="evidence" value="ECO:0007669"/>
    <property type="project" value="UniProtKB-SubCell"/>
</dbReference>
<dbReference type="GO" id="GO:0005764">
    <property type="term" value="C:lysosome"/>
    <property type="evidence" value="ECO:0000314"/>
    <property type="project" value="UniProtKB"/>
</dbReference>
<dbReference type="GO" id="GO:0015036">
    <property type="term" value="F:disulfide oxidoreductase activity"/>
    <property type="evidence" value="ECO:0000304"/>
    <property type="project" value="MGI"/>
</dbReference>
<dbReference type="GO" id="GO:0016667">
    <property type="term" value="F:oxidoreductase activity, acting on a sulfur group of donors"/>
    <property type="evidence" value="ECO:0000250"/>
    <property type="project" value="UniProtKB"/>
</dbReference>
<dbReference type="GO" id="GO:0016671">
    <property type="term" value="F:oxidoreductase activity, acting on a sulfur group of donors, disulfide as acceptor"/>
    <property type="evidence" value="ECO:0007669"/>
    <property type="project" value="InterPro"/>
</dbReference>
<dbReference type="GO" id="GO:0042590">
    <property type="term" value="P:antigen processing and presentation of exogenous peptide antigen via MHC class I"/>
    <property type="evidence" value="ECO:0000315"/>
    <property type="project" value="UniProtKB"/>
</dbReference>
<dbReference type="GO" id="GO:0019886">
    <property type="term" value="P:antigen processing and presentation of exogenous peptide antigen via MHC class II"/>
    <property type="evidence" value="ECO:0000315"/>
    <property type="project" value="MGI"/>
</dbReference>
<dbReference type="GO" id="GO:0048147">
    <property type="term" value="P:negative regulation of fibroblast proliferation"/>
    <property type="evidence" value="ECO:0000315"/>
    <property type="project" value="MGI"/>
</dbReference>
<dbReference type="GO" id="GO:0050821">
    <property type="term" value="P:protein stabilization"/>
    <property type="evidence" value="ECO:0000315"/>
    <property type="project" value="MGI"/>
</dbReference>
<dbReference type="InterPro" id="IPR004911">
    <property type="entry name" value="Interferon-induced_GILT"/>
</dbReference>
<dbReference type="PANTHER" id="PTHR13234">
    <property type="entry name" value="GAMMA-INTERFERON INDUCIBLE LYSOSOMAL THIOL REDUCTASE GILT"/>
    <property type="match status" value="1"/>
</dbReference>
<dbReference type="PANTHER" id="PTHR13234:SF8">
    <property type="entry name" value="GAMMA-INTERFERON-INDUCIBLE LYSOSOMAL THIOL REDUCTASE"/>
    <property type="match status" value="1"/>
</dbReference>
<dbReference type="Pfam" id="PF03227">
    <property type="entry name" value="GILT"/>
    <property type="match status" value="1"/>
</dbReference>
<comment type="function">
    <text evidence="4 5 6">Lysosomal thiol reductase that can reduce protein disulfide bonds. May facilitate the complete unfolding of proteins destined for lysosomal degradation. Plays an important role in antigen processing. Facilitates the generation of MHC class II-restricted epitodes from disulfide bond-containing antigen by the endocytic reduction of disulfide bonds. Also facilitates MHC class I-restricted recognition of exogenous antigens containing disulfide bonds by CD8+ T-cells or crosspresentation.</text>
</comment>
<comment type="subunit">
    <text evidence="1">Dimer; disulfide-linked.</text>
</comment>
<comment type="subcellular location">
    <subcellularLocation>
        <location evidence="1">Secreted</location>
    </subcellularLocation>
    <subcellularLocation>
        <location evidence="4">Lysosome</location>
    </subcellularLocation>
</comment>
<comment type="PTM">
    <text evidence="1">N-glycosylated. Sugar chains contain mannose-6-phosphate (By similarity).</text>
</comment>
<comment type="PTM">
    <text evidence="1">Synthesized as a 35 kDa precursor which is then processed into the mature 30 kDa form via cleavage of N-terminal and C-terminal propeptides. Processing of the precursor is mediated by multiple lysosomal proteases (By similarity).</text>
</comment>
<comment type="disruption phenotype">
    <text evidence="4 5 6">Mice lacking GILT are deficient in generating major histocompatibility complex class-II-restricted CD4(+) T-cell responses to protein antigens that contain disulfide bonds. Mice are partially protected from Listeria monocytogenes infection, they exhibit reduced bacterial replication in spleen and liver. Bacterial escape from the phagosome is impaired in the macrophages of these mice.</text>
</comment>
<comment type="miscellaneous">
    <text evidence="1">Both precursor form and mature form have thiol reductase activity.</text>
</comment>
<comment type="similarity">
    <text evidence="7">Belongs to the GILT family.</text>
</comment>
<comment type="sequence caution" evidence="7">
    <conflict type="erroneous initiation">
        <sequence resource="EMBL-CDS" id="AAG00598"/>
    </conflict>
    <text>Extended N-terminus.</text>
</comment>
<name>GILT_MOUSE</name>
<reference key="1">
    <citation type="journal article" date="2001" name="Science">
        <title>Defective antigen processing in GILT-free mice.</title>
        <authorList>
            <person name="Maric M."/>
            <person name="Arunachalam B."/>
            <person name="Phan U.T."/>
            <person name="Dong C."/>
            <person name="Garrett W.S."/>
            <person name="Cannon K.S."/>
            <person name="Alfonso C."/>
            <person name="Karlsson L."/>
            <person name="Flavell R.A."/>
            <person name="Cresswell P."/>
        </authorList>
    </citation>
    <scope>NUCLEOTIDE SEQUENCE [GENOMIC DNA / MRNA]</scope>
    <scope>SUBCELLULAR LOCATION</scope>
    <scope>DISRUPTION PHENOTYPE</scope>
    <scope>FUNCTION</scope>
    <source>
        <strain>129/SvJ</strain>
        <strain>C57BL/6J</strain>
    </source>
</reference>
<reference key="2">
    <citation type="submission" date="2000-07" db="EMBL/GenBank/DDBJ databases">
        <authorList>
            <person name="Weber D.A."/>
            <person name="Jun J."/>
            <person name="Jensen P.E."/>
        </authorList>
    </citation>
    <scope>NUCLEOTIDE SEQUENCE [MRNA]</scope>
    <source>
        <tissue>Liver</tissue>
    </source>
</reference>
<reference key="3">
    <citation type="journal article" date="2005" name="Science">
        <title>The transcriptional landscape of the mammalian genome.</title>
        <authorList>
            <person name="Carninci P."/>
            <person name="Kasukawa T."/>
            <person name="Katayama S."/>
            <person name="Gough J."/>
            <person name="Frith M.C."/>
            <person name="Maeda N."/>
            <person name="Oyama R."/>
            <person name="Ravasi T."/>
            <person name="Lenhard B."/>
            <person name="Wells C."/>
            <person name="Kodzius R."/>
            <person name="Shimokawa K."/>
            <person name="Bajic V.B."/>
            <person name="Brenner S.E."/>
            <person name="Batalov S."/>
            <person name="Forrest A.R."/>
            <person name="Zavolan M."/>
            <person name="Davis M.J."/>
            <person name="Wilming L.G."/>
            <person name="Aidinis V."/>
            <person name="Allen J.E."/>
            <person name="Ambesi-Impiombato A."/>
            <person name="Apweiler R."/>
            <person name="Aturaliya R.N."/>
            <person name="Bailey T.L."/>
            <person name="Bansal M."/>
            <person name="Baxter L."/>
            <person name="Beisel K.W."/>
            <person name="Bersano T."/>
            <person name="Bono H."/>
            <person name="Chalk A.M."/>
            <person name="Chiu K.P."/>
            <person name="Choudhary V."/>
            <person name="Christoffels A."/>
            <person name="Clutterbuck D.R."/>
            <person name="Crowe M.L."/>
            <person name="Dalla E."/>
            <person name="Dalrymple B.P."/>
            <person name="de Bono B."/>
            <person name="Della Gatta G."/>
            <person name="di Bernardo D."/>
            <person name="Down T."/>
            <person name="Engstrom P."/>
            <person name="Fagiolini M."/>
            <person name="Faulkner G."/>
            <person name="Fletcher C.F."/>
            <person name="Fukushima T."/>
            <person name="Furuno M."/>
            <person name="Futaki S."/>
            <person name="Gariboldi M."/>
            <person name="Georgii-Hemming P."/>
            <person name="Gingeras T.R."/>
            <person name="Gojobori T."/>
            <person name="Green R.E."/>
            <person name="Gustincich S."/>
            <person name="Harbers M."/>
            <person name="Hayashi Y."/>
            <person name="Hensch T.K."/>
            <person name="Hirokawa N."/>
            <person name="Hill D."/>
            <person name="Huminiecki L."/>
            <person name="Iacono M."/>
            <person name="Ikeo K."/>
            <person name="Iwama A."/>
            <person name="Ishikawa T."/>
            <person name="Jakt M."/>
            <person name="Kanapin A."/>
            <person name="Katoh M."/>
            <person name="Kawasawa Y."/>
            <person name="Kelso J."/>
            <person name="Kitamura H."/>
            <person name="Kitano H."/>
            <person name="Kollias G."/>
            <person name="Krishnan S.P."/>
            <person name="Kruger A."/>
            <person name="Kummerfeld S.K."/>
            <person name="Kurochkin I.V."/>
            <person name="Lareau L.F."/>
            <person name="Lazarevic D."/>
            <person name="Lipovich L."/>
            <person name="Liu J."/>
            <person name="Liuni S."/>
            <person name="McWilliam S."/>
            <person name="Madan Babu M."/>
            <person name="Madera M."/>
            <person name="Marchionni L."/>
            <person name="Matsuda H."/>
            <person name="Matsuzawa S."/>
            <person name="Miki H."/>
            <person name="Mignone F."/>
            <person name="Miyake S."/>
            <person name="Morris K."/>
            <person name="Mottagui-Tabar S."/>
            <person name="Mulder N."/>
            <person name="Nakano N."/>
            <person name="Nakauchi H."/>
            <person name="Ng P."/>
            <person name="Nilsson R."/>
            <person name="Nishiguchi S."/>
            <person name="Nishikawa S."/>
            <person name="Nori F."/>
            <person name="Ohara O."/>
            <person name="Okazaki Y."/>
            <person name="Orlando V."/>
            <person name="Pang K.C."/>
            <person name="Pavan W.J."/>
            <person name="Pavesi G."/>
            <person name="Pesole G."/>
            <person name="Petrovsky N."/>
            <person name="Piazza S."/>
            <person name="Reed J."/>
            <person name="Reid J.F."/>
            <person name="Ring B.Z."/>
            <person name="Ringwald M."/>
            <person name="Rost B."/>
            <person name="Ruan Y."/>
            <person name="Salzberg S.L."/>
            <person name="Sandelin A."/>
            <person name="Schneider C."/>
            <person name="Schoenbach C."/>
            <person name="Sekiguchi K."/>
            <person name="Semple C.A."/>
            <person name="Seno S."/>
            <person name="Sessa L."/>
            <person name="Sheng Y."/>
            <person name="Shibata Y."/>
            <person name="Shimada H."/>
            <person name="Shimada K."/>
            <person name="Silva D."/>
            <person name="Sinclair B."/>
            <person name="Sperling S."/>
            <person name="Stupka E."/>
            <person name="Sugiura K."/>
            <person name="Sultana R."/>
            <person name="Takenaka Y."/>
            <person name="Taki K."/>
            <person name="Tammoja K."/>
            <person name="Tan S.L."/>
            <person name="Tang S."/>
            <person name="Taylor M.S."/>
            <person name="Tegner J."/>
            <person name="Teichmann S.A."/>
            <person name="Ueda H.R."/>
            <person name="van Nimwegen E."/>
            <person name="Verardo R."/>
            <person name="Wei C.L."/>
            <person name="Yagi K."/>
            <person name="Yamanishi H."/>
            <person name="Zabarovsky E."/>
            <person name="Zhu S."/>
            <person name="Zimmer A."/>
            <person name="Hide W."/>
            <person name="Bult C."/>
            <person name="Grimmond S.M."/>
            <person name="Teasdale R.D."/>
            <person name="Liu E.T."/>
            <person name="Brusic V."/>
            <person name="Quackenbush J."/>
            <person name="Wahlestedt C."/>
            <person name="Mattick J.S."/>
            <person name="Hume D.A."/>
            <person name="Kai C."/>
            <person name="Sasaki D."/>
            <person name="Tomaru Y."/>
            <person name="Fukuda S."/>
            <person name="Kanamori-Katayama M."/>
            <person name="Suzuki M."/>
            <person name="Aoki J."/>
            <person name="Arakawa T."/>
            <person name="Iida J."/>
            <person name="Imamura K."/>
            <person name="Itoh M."/>
            <person name="Kato T."/>
            <person name="Kawaji H."/>
            <person name="Kawagashira N."/>
            <person name="Kawashima T."/>
            <person name="Kojima M."/>
            <person name="Kondo S."/>
            <person name="Konno H."/>
            <person name="Nakano K."/>
            <person name="Ninomiya N."/>
            <person name="Nishio T."/>
            <person name="Okada M."/>
            <person name="Plessy C."/>
            <person name="Shibata K."/>
            <person name="Shiraki T."/>
            <person name="Suzuki S."/>
            <person name="Tagami M."/>
            <person name="Waki K."/>
            <person name="Watahiki A."/>
            <person name="Okamura-Oho Y."/>
            <person name="Suzuki H."/>
            <person name="Kawai J."/>
            <person name="Hayashizaki Y."/>
        </authorList>
    </citation>
    <scope>NUCLEOTIDE SEQUENCE [LARGE SCALE MRNA]</scope>
    <source>
        <strain>NOD</strain>
        <tissue>Spleen</tissue>
    </source>
</reference>
<reference key="4">
    <citation type="journal article" date="2009" name="PLoS Biol.">
        <title>Lineage-specific biology revealed by a finished genome assembly of the mouse.</title>
        <authorList>
            <person name="Church D.M."/>
            <person name="Goodstadt L."/>
            <person name="Hillier L.W."/>
            <person name="Zody M.C."/>
            <person name="Goldstein S."/>
            <person name="She X."/>
            <person name="Bult C.J."/>
            <person name="Agarwala R."/>
            <person name="Cherry J.L."/>
            <person name="DiCuccio M."/>
            <person name="Hlavina W."/>
            <person name="Kapustin Y."/>
            <person name="Meric P."/>
            <person name="Maglott D."/>
            <person name="Birtle Z."/>
            <person name="Marques A.C."/>
            <person name="Graves T."/>
            <person name="Zhou S."/>
            <person name="Teague B."/>
            <person name="Potamousis K."/>
            <person name="Churas C."/>
            <person name="Place M."/>
            <person name="Herschleb J."/>
            <person name="Runnheim R."/>
            <person name="Forrest D."/>
            <person name="Amos-Landgraf J."/>
            <person name="Schwartz D.C."/>
            <person name="Cheng Z."/>
            <person name="Lindblad-Toh K."/>
            <person name="Eichler E.E."/>
            <person name="Ponting C.P."/>
        </authorList>
    </citation>
    <scope>NUCLEOTIDE SEQUENCE [LARGE SCALE GENOMIC DNA]</scope>
    <source>
        <strain>C57BL/6J</strain>
    </source>
</reference>
<reference key="5">
    <citation type="submission" date="2005-07" db="EMBL/GenBank/DDBJ databases">
        <authorList>
            <person name="Mural R.J."/>
            <person name="Adams M.D."/>
            <person name="Myers E.W."/>
            <person name="Smith H.O."/>
            <person name="Venter J.C."/>
        </authorList>
    </citation>
    <scope>NUCLEOTIDE SEQUENCE [LARGE SCALE GENOMIC DNA]</scope>
</reference>
<reference key="6">
    <citation type="journal article" date="2004" name="Genome Res.">
        <title>The status, quality, and expansion of the NIH full-length cDNA project: the Mammalian Gene Collection (MGC).</title>
        <authorList>
            <consortium name="The MGC Project Team"/>
        </authorList>
    </citation>
    <scope>NUCLEOTIDE SEQUENCE [LARGE SCALE MRNA]</scope>
    <source>
        <strain>FVB/N</strain>
        <tissue>Colon</tissue>
    </source>
</reference>
<reference key="7">
    <citation type="journal article" date="2008" name="Nature">
        <title>GILT is a critical host factor for Listeria monocytogenes infection.</title>
        <authorList>
            <person name="Singh R."/>
            <person name="Jamieson A."/>
            <person name="Cresswell P."/>
        </authorList>
    </citation>
    <scope>DISRUPTION PHENOTYPE</scope>
    <scope>FUNCTION IN LISTERIA MONOCYTOGENES INFECTION</scope>
</reference>
<reference key="8">
    <citation type="journal article" date="2010" name="Cell">
        <title>A tissue-specific atlas of mouse protein phosphorylation and expression.</title>
        <authorList>
            <person name="Huttlin E.L."/>
            <person name="Jedrychowski M.P."/>
            <person name="Elias J.E."/>
            <person name="Goswami T."/>
            <person name="Rad R."/>
            <person name="Beausoleil S.A."/>
            <person name="Villen J."/>
            <person name="Haas W."/>
            <person name="Sowa M.E."/>
            <person name="Gygi S.P."/>
        </authorList>
    </citation>
    <scope>IDENTIFICATION BY MASS SPECTROMETRY [LARGE SCALE ANALYSIS]</scope>
    <source>
        <tissue>Brown adipose tissue</tissue>
        <tissue>Kidney</tissue>
        <tissue>Liver</tissue>
        <tissue>Lung</tissue>
        <tissue>Pancreas</tissue>
        <tissue>Spleen</tissue>
        <tissue>Testis</tissue>
    </source>
</reference>
<reference key="9">
    <citation type="journal article" date="2010" name="Science">
        <title>Defective cross-presentation of viral antigens in GILT-free mice.</title>
        <authorList>
            <person name="Singh R."/>
            <person name="Cresswell P."/>
        </authorList>
    </citation>
    <scope>DISRUPTION PHENOTYPE</scope>
    <scope>FUNCTION IN CROSS-PRESENTATION OF VIRAL ANTIGEN</scope>
</reference>
<organism>
    <name type="scientific">Mus musculus</name>
    <name type="common">Mouse</name>
    <dbReference type="NCBI Taxonomy" id="10090"/>
    <lineage>
        <taxon>Eukaryota</taxon>
        <taxon>Metazoa</taxon>
        <taxon>Chordata</taxon>
        <taxon>Craniata</taxon>
        <taxon>Vertebrata</taxon>
        <taxon>Euteleostomi</taxon>
        <taxon>Mammalia</taxon>
        <taxon>Eutheria</taxon>
        <taxon>Euarchontoglires</taxon>
        <taxon>Glires</taxon>
        <taxon>Rodentia</taxon>
        <taxon>Myomorpha</taxon>
        <taxon>Muroidea</taxon>
        <taxon>Muridae</taxon>
        <taxon>Murinae</taxon>
        <taxon>Mus</taxon>
        <taxon>Mus</taxon>
    </lineage>
</organism>
<sequence>MSWSPILPFLSLLLLLFPLEVPRAATASLSQASSEGTTTCKAHDVCLLGPRPLPPSPPVRVSLYYESLCGACRYFLVRDLFPTWLMVMEIMNITLVPYGNAQERNVSGTWEFTCQHGELECRLNMVEACLLDKLEKEAAFLTIVCMEEMDDMEKKLGPCLQVYAPEVSPESIMECATGKRGTQLMHENAQLTDALHPPHEYVPWVLVNEKPLKDPSELLSIVCQLYQGTEKPDICSSIADSPRKVCYK</sequence>
<gene>
    <name type="primary">Ifi30</name>
    <name type="synonym">Gilt</name>
    <name type="synonym">Ip30</name>
</gene>
<proteinExistence type="evidence at protein level"/>
<feature type="signal peptide" evidence="3">
    <location>
        <begin position="1"/>
        <end position="26"/>
    </location>
</feature>
<feature type="propeptide" id="PRO_0000406221" description="Removed in mature form" evidence="2">
    <location>
        <begin position="27"/>
        <end position="54"/>
    </location>
</feature>
<feature type="chain" id="PRO_0000406222" description="Gamma-interferon-inducible lysosomal thiol reductase">
    <location>
        <begin position="55"/>
        <end position="230"/>
    </location>
</feature>
<feature type="propeptide" id="PRO_0000406223" description="Removed in mature form" evidence="2">
    <location>
        <begin position="231"/>
        <end position="248"/>
    </location>
</feature>
<feature type="glycosylation site" description="N-linked (GlcNAc...) asparagine" evidence="3">
    <location>
        <position position="92"/>
    </location>
</feature>
<feature type="glycosylation site" description="N-linked (GlcNAc...) asparagine" evidence="3">
    <location>
        <position position="105"/>
    </location>
</feature>
<feature type="disulfide bond" description="Redox-active" evidence="2">
    <location>
        <begin position="69"/>
        <end position="72"/>
    </location>
</feature>
<feature type="sequence conflict" description="In Ref. 1; AAG34681/AAG34682, 2; AAG00598 and 6; AAH54852." evidence="7" ref="1 2 6">
    <original>A</original>
    <variation>V</variation>
    <location>
        <position position="42"/>
    </location>
</feature>
<feature type="sequence conflict" description="In Ref. 3; BAE33895." evidence="7" ref="3">
    <original>F</original>
    <variation>Y</variation>
    <location>
        <position position="112"/>
    </location>
</feature>
<feature type="sequence conflict" description="In Ref. 2; AAG00598." evidence="7" ref="2">
    <original>V</original>
    <variation>C</variation>
    <location>
        <position position="245"/>
    </location>
</feature>
<feature type="strand" evidence="8">
    <location>
        <begin position="59"/>
        <end position="65"/>
    </location>
</feature>
<feature type="helix" evidence="8">
    <location>
        <begin position="70"/>
        <end position="78"/>
    </location>
</feature>
<feature type="helix" evidence="8">
    <location>
        <begin position="80"/>
        <end position="87"/>
    </location>
</feature>
<feature type="helix" evidence="8">
    <location>
        <begin position="88"/>
        <end position="90"/>
    </location>
</feature>
<feature type="strand" evidence="8">
    <location>
        <begin position="91"/>
        <end position="97"/>
    </location>
</feature>
<feature type="strand" evidence="8">
    <location>
        <begin position="102"/>
        <end position="106"/>
    </location>
</feature>
<feature type="strand" evidence="8">
    <location>
        <begin position="109"/>
        <end position="113"/>
    </location>
</feature>
<feature type="helix" evidence="8">
    <location>
        <begin position="118"/>
        <end position="133"/>
    </location>
</feature>
<feature type="helix" evidence="8">
    <location>
        <begin position="136"/>
        <end position="147"/>
    </location>
</feature>
<feature type="strand" evidence="8">
    <location>
        <begin position="149"/>
        <end position="151"/>
    </location>
</feature>
<feature type="helix" evidence="8">
    <location>
        <begin position="153"/>
        <end position="155"/>
    </location>
</feature>
<feature type="helix" evidence="8">
    <location>
        <begin position="156"/>
        <end position="163"/>
    </location>
</feature>
<feature type="helix" evidence="8">
    <location>
        <begin position="169"/>
        <end position="177"/>
    </location>
</feature>
<feature type="helix" evidence="8">
    <location>
        <begin position="179"/>
        <end position="193"/>
    </location>
</feature>
<feature type="strand" evidence="8">
    <location>
        <begin position="200"/>
        <end position="207"/>
    </location>
</feature>
<feature type="helix" evidence="8">
    <location>
        <begin position="215"/>
        <end position="217"/>
    </location>
</feature>
<feature type="helix" evidence="8">
    <location>
        <begin position="218"/>
        <end position="225"/>
    </location>
</feature>
<feature type="helix" evidence="8">
    <location>
        <begin position="233"/>
        <end position="238"/>
    </location>
</feature>
<accession>Q9ESY9</accession>
<accession>G3X911</accession>
<accession>Q3U0F9</accession>
<accession>Q9EP56</accession>